<protein>
    <recommendedName>
        <fullName evidence="1">Tryptophan synthase beta chain</fullName>
        <ecNumber evidence="1">4.2.1.20</ecNumber>
    </recommendedName>
</protein>
<dbReference type="EC" id="4.2.1.20" evidence="1"/>
<dbReference type="EMBL" id="BX548174">
    <property type="protein sequence ID" value="CAE18623.1"/>
    <property type="molecule type" value="Genomic_DNA"/>
</dbReference>
<dbReference type="RefSeq" id="WP_011131803.1">
    <property type="nucleotide sequence ID" value="NC_005072.1"/>
</dbReference>
<dbReference type="SMR" id="Q7TUH0"/>
<dbReference type="STRING" id="59919.PMM0164"/>
<dbReference type="KEGG" id="pmm:PMM0164"/>
<dbReference type="eggNOG" id="COG0133">
    <property type="taxonomic scope" value="Bacteria"/>
</dbReference>
<dbReference type="HOGENOM" id="CLU_016734_3_1_3"/>
<dbReference type="OrthoDB" id="9766131at2"/>
<dbReference type="UniPathway" id="UPA00035">
    <property type="reaction ID" value="UER00044"/>
</dbReference>
<dbReference type="Proteomes" id="UP000001026">
    <property type="component" value="Chromosome"/>
</dbReference>
<dbReference type="GO" id="GO:0005737">
    <property type="term" value="C:cytoplasm"/>
    <property type="evidence" value="ECO:0007669"/>
    <property type="project" value="TreeGrafter"/>
</dbReference>
<dbReference type="GO" id="GO:0004834">
    <property type="term" value="F:tryptophan synthase activity"/>
    <property type="evidence" value="ECO:0007669"/>
    <property type="project" value="UniProtKB-UniRule"/>
</dbReference>
<dbReference type="CDD" id="cd06446">
    <property type="entry name" value="Trp-synth_B"/>
    <property type="match status" value="1"/>
</dbReference>
<dbReference type="FunFam" id="3.40.50.1100:FF:000001">
    <property type="entry name" value="Tryptophan synthase beta chain"/>
    <property type="match status" value="1"/>
</dbReference>
<dbReference type="FunFam" id="3.40.50.1100:FF:000004">
    <property type="entry name" value="Tryptophan synthase beta chain"/>
    <property type="match status" value="1"/>
</dbReference>
<dbReference type="Gene3D" id="3.40.50.1100">
    <property type="match status" value="2"/>
</dbReference>
<dbReference type="HAMAP" id="MF_00133">
    <property type="entry name" value="Trp_synth_beta"/>
    <property type="match status" value="1"/>
</dbReference>
<dbReference type="InterPro" id="IPR006653">
    <property type="entry name" value="Trp_synth_b_CS"/>
</dbReference>
<dbReference type="InterPro" id="IPR006654">
    <property type="entry name" value="Trp_synth_beta"/>
</dbReference>
<dbReference type="InterPro" id="IPR023026">
    <property type="entry name" value="Trp_synth_beta/beta-like"/>
</dbReference>
<dbReference type="InterPro" id="IPR001926">
    <property type="entry name" value="TrpB-like_PALP"/>
</dbReference>
<dbReference type="InterPro" id="IPR036052">
    <property type="entry name" value="TrpB-like_PALP_sf"/>
</dbReference>
<dbReference type="NCBIfam" id="TIGR00263">
    <property type="entry name" value="trpB"/>
    <property type="match status" value="1"/>
</dbReference>
<dbReference type="PANTHER" id="PTHR48077:SF3">
    <property type="entry name" value="TRYPTOPHAN SYNTHASE"/>
    <property type="match status" value="1"/>
</dbReference>
<dbReference type="PANTHER" id="PTHR48077">
    <property type="entry name" value="TRYPTOPHAN SYNTHASE-RELATED"/>
    <property type="match status" value="1"/>
</dbReference>
<dbReference type="Pfam" id="PF00291">
    <property type="entry name" value="PALP"/>
    <property type="match status" value="1"/>
</dbReference>
<dbReference type="PIRSF" id="PIRSF001413">
    <property type="entry name" value="Trp_syn_beta"/>
    <property type="match status" value="1"/>
</dbReference>
<dbReference type="SUPFAM" id="SSF53686">
    <property type="entry name" value="Tryptophan synthase beta subunit-like PLP-dependent enzymes"/>
    <property type="match status" value="1"/>
</dbReference>
<dbReference type="PROSITE" id="PS00168">
    <property type="entry name" value="TRP_SYNTHASE_BETA"/>
    <property type="match status" value="1"/>
</dbReference>
<sequence length="414" mass="44900">MVSTISRQDQNNNDDLNQPSKEGRFGKYGGQYVPETLMPALFELEEAASDAWKDKQFVNELNHLLKTYVGRETPLYEAKRLTEHYQTKTSTSRIWLKREDLNHTGAHKINNALGQALLAIRMGKQRIIAETGAGQHGVATATVCARFGLQCIIYMGAEDIKRQSLNVFRMKLLGAEVKVVTSGTATLKDATSEAIRDWVSNVETTHYILGSVAGPHPFPMIVRDFHAVIGEEAKKQCLESFGSLPDILLACVGGGSNAMGLFHPFVKEKSVRLIGVEAAGSGVNTEKHAATITKGSVGILHGSMSLLLQDKDGQVQEAHSISAGLDYPGVGPEHSYLKDIGRAEYGSVTDAEALDALKLVSELEGIIPALETAHAFAWLEKLCPTLDKDTEIVINCSGRGDKDVNTVASSLNID</sequence>
<comment type="function">
    <text evidence="1">The beta subunit is responsible for the synthesis of L-tryptophan from indole and L-serine.</text>
</comment>
<comment type="catalytic activity">
    <reaction evidence="1">
        <text>(1S,2R)-1-C-(indol-3-yl)glycerol 3-phosphate + L-serine = D-glyceraldehyde 3-phosphate + L-tryptophan + H2O</text>
        <dbReference type="Rhea" id="RHEA:10532"/>
        <dbReference type="ChEBI" id="CHEBI:15377"/>
        <dbReference type="ChEBI" id="CHEBI:33384"/>
        <dbReference type="ChEBI" id="CHEBI:57912"/>
        <dbReference type="ChEBI" id="CHEBI:58866"/>
        <dbReference type="ChEBI" id="CHEBI:59776"/>
        <dbReference type="EC" id="4.2.1.20"/>
    </reaction>
</comment>
<comment type="cofactor">
    <cofactor evidence="1">
        <name>pyridoxal 5'-phosphate</name>
        <dbReference type="ChEBI" id="CHEBI:597326"/>
    </cofactor>
</comment>
<comment type="pathway">
    <text evidence="1">Amino-acid biosynthesis; L-tryptophan biosynthesis; L-tryptophan from chorismate: step 5/5.</text>
</comment>
<comment type="subunit">
    <text evidence="1">Tetramer of two alpha and two beta chains.</text>
</comment>
<comment type="similarity">
    <text evidence="1">Belongs to the TrpB family.</text>
</comment>
<organism>
    <name type="scientific">Prochlorococcus marinus subsp. pastoris (strain CCMP1986 / NIES-2087 / MED4)</name>
    <dbReference type="NCBI Taxonomy" id="59919"/>
    <lineage>
        <taxon>Bacteria</taxon>
        <taxon>Bacillati</taxon>
        <taxon>Cyanobacteriota</taxon>
        <taxon>Cyanophyceae</taxon>
        <taxon>Synechococcales</taxon>
        <taxon>Prochlorococcaceae</taxon>
        <taxon>Prochlorococcus</taxon>
    </lineage>
</organism>
<gene>
    <name evidence="1" type="primary">trpB</name>
    <name type="ordered locus">PMM0164</name>
</gene>
<proteinExistence type="inferred from homology"/>
<evidence type="ECO:0000255" key="1">
    <source>
        <dbReference type="HAMAP-Rule" id="MF_00133"/>
    </source>
</evidence>
<evidence type="ECO:0000256" key="2">
    <source>
        <dbReference type="SAM" id="MobiDB-lite"/>
    </source>
</evidence>
<keyword id="KW-0028">Amino-acid biosynthesis</keyword>
<keyword id="KW-0057">Aromatic amino acid biosynthesis</keyword>
<keyword id="KW-0456">Lyase</keyword>
<keyword id="KW-0663">Pyridoxal phosphate</keyword>
<keyword id="KW-0822">Tryptophan biosynthesis</keyword>
<reference key="1">
    <citation type="journal article" date="2003" name="Nature">
        <title>Genome divergence in two Prochlorococcus ecotypes reflects oceanic niche differentiation.</title>
        <authorList>
            <person name="Rocap G."/>
            <person name="Larimer F.W."/>
            <person name="Lamerdin J.E."/>
            <person name="Malfatti S."/>
            <person name="Chain P."/>
            <person name="Ahlgren N.A."/>
            <person name="Arellano A."/>
            <person name="Coleman M."/>
            <person name="Hauser L."/>
            <person name="Hess W.R."/>
            <person name="Johnson Z.I."/>
            <person name="Land M.L."/>
            <person name="Lindell D."/>
            <person name="Post A.F."/>
            <person name="Regala W."/>
            <person name="Shah M."/>
            <person name="Shaw S.L."/>
            <person name="Steglich C."/>
            <person name="Sullivan M.B."/>
            <person name="Ting C.S."/>
            <person name="Tolonen A."/>
            <person name="Webb E.A."/>
            <person name="Zinser E.R."/>
            <person name="Chisholm S.W."/>
        </authorList>
    </citation>
    <scope>NUCLEOTIDE SEQUENCE [LARGE SCALE GENOMIC DNA]</scope>
    <source>
        <strain>CCMP1986 / NIES-2087 / MED4</strain>
    </source>
</reference>
<name>TRPB_PROMP</name>
<accession>Q7TUH0</accession>
<feature type="chain" id="PRO_0000098980" description="Tryptophan synthase beta chain">
    <location>
        <begin position="1"/>
        <end position="414"/>
    </location>
</feature>
<feature type="region of interest" description="Disordered" evidence="2">
    <location>
        <begin position="1"/>
        <end position="28"/>
    </location>
</feature>
<feature type="compositionally biased region" description="Low complexity" evidence="2">
    <location>
        <begin position="8"/>
        <end position="18"/>
    </location>
</feature>
<feature type="modified residue" description="N6-(pyridoxal phosphate)lysine" evidence="1">
    <location>
        <position position="108"/>
    </location>
</feature>